<reference key="1">
    <citation type="journal article" date="2008" name="J. Bacteriol.">
        <title>The complete genome sequence of Actinobacillus pleuropneumoniae L20 (serotype 5b).</title>
        <authorList>
            <person name="Foote S.J."/>
            <person name="Bosse J.T."/>
            <person name="Bouevitch A.B."/>
            <person name="Langford P.R."/>
            <person name="Young N.M."/>
            <person name="Nash J.H.E."/>
        </authorList>
    </citation>
    <scope>NUCLEOTIDE SEQUENCE [LARGE SCALE GENOMIC DNA]</scope>
    <source>
        <strain>L20</strain>
    </source>
</reference>
<accession>A3MZY9</accession>
<dbReference type="EMBL" id="CP000569">
    <property type="protein sequence ID" value="ABN73725.1"/>
    <property type="molecule type" value="Genomic_DNA"/>
</dbReference>
<dbReference type="RefSeq" id="WP_005596893.1">
    <property type="nucleotide sequence ID" value="NC_009053.1"/>
</dbReference>
<dbReference type="SMR" id="A3MZY9"/>
<dbReference type="STRING" id="416269.APL_0623"/>
<dbReference type="EnsemblBacteria" id="ABN73725">
    <property type="protein sequence ID" value="ABN73725"/>
    <property type="gene ID" value="APL_0623"/>
</dbReference>
<dbReference type="GeneID" id="48598811"/>
<dbReference type="KEGG" id="apl:APL_0623"/>
<dbReference type="eggNOG" id="COG3074">
    <property type="taxonomic scope" value="Bacteria"/>
</dbReference>
<dbReference type="HOGENOM" id="CLU_171174_0_0_6"/>
<dbReference type="Proteomes" id="UP000001432">
    <property type="component" value="Chromosome"/>
</dbReference>
<dbReference type="GO" id="GO:0005737">
    <property type="term" value="C:cytoplasm"/>
    <property type="evidence" value="ECO:0007669"/>
    <property type="project" value="UniProtKB-SubCell"/>
</dbReference>
<dbReference type="GO" id="GO:0000917">
    <property type="term" value="P:division septum assembly"/>
    <property type="evidence" value="ECO:0007669"/>
    <property type="project" value="UniProtKB-KW"/>
</dbReference>
<dbReference type="GO" id="GO:0043093">
    <property type="term" value="P:FtsZ-dependent cytokinesis"/>
    <property type="evidence" value="ECO:0007669"/>
    <property type="project" value="UniProtKB-UniRule"/>
</dbReference>
<dbReference type="Gene3D" id="1.20.5.340">
    <property type="match status" value="1"/>
</dbReference>
<dbReference type="HAMAP" id="MF_01196">
    <property type="entry name" value="ZapB"/>
    <property type="match status" value="1"/>
</dbReference>
<dbReference type="InterPro" id="IPR009252">
    <property type="entry name" value="Cell_div_ZapB"/>
</dbReference>
<dbReference type="Pfam" id="PF06005">
    <property type="entry name" value="ZapB"/>
    <property type="match status" value="1"/>
</dbReference>
<name>ZAPB_ACTP2</name>
<proteinExistence type="inferred from homology"/>
<sequence>MSLPILDQLEEKIKQAVETIQLLQLEVEELKEKNTTVEQEKETLRQEYEQLKSEQQSFQDRLRSLLGQIDNV</sequence>
<evidence type="ECO:0000255" key="1">
    <source>
        <dbReference type="HAMAP-Rule" id="MF_01196"/>
    </source>
</evidence>
<comment type="function">
    <text evidence="1">Non-essential, abundant cell division factor that is required for proper Z-ring formation. It is recruited early to the divisome by direct interaction with FtsZ, stimulating Z-ring assembly and thereby promoting cell division earlier in the cell cycle. Its recruitment to the Z-ring requires functional FtsA or ZipA.</text>
</comment>
<comment type="subunit">
    <text evidence="1">Homodimer. The ends of the coiled-coil dimer bind to each other, forming polymers. Interacts with FtsZ.</text>
</comment>
<comment type="subcellular location">
    <subcellularLocation>
        <location>Cytoplasm</location>
    </subcellularLocation>
    <text evidence="1">Localizes to the septum at mid-cell, in a FtsZ-like pattern.</text>
</comment>
<comment type="similarity">
    <text evidence="1">Belongs to the ZapB family.</text>
</comment>
<gene>
    <name evidence="1" type="primary">zapB</name>
    <name type="ordered locus">APL_0623</name>
</gene>
<feature type="chain" id="PRO_0000333890" description="Cell division protein ZapB">
    <location>
        <begin position="1"/>
        <end position="72"/>
    </location>
</feature>
<feature type="coiled-coil region" evidence="1">
    <location>
        <begin position="5"/>
        <end position="71"/>
    </location>
</feature>
<protein>
    <recommendedName>
        <fullName evidence="1">Cell division protein ZapB</fullName>
    </recommendedName>
</protein>
<organism>
    <name type="scientific">Actinobacillus pleuropneumoniae serotype 5b (strain L20)</name>
    <dbReference type="NCBI Taxonomy" id="416269"/>
    <lineage>
        <taxon>Bacteria</taxon>
        <taxon>Pseudomonadati</taxon>
        <taxon>Pseudomonadota</taxon>
        <taxon>Gammaproteobacteria</taxon>
        <taxon>Pasteurellales</taxon>
        <taxon>Pasteurellaceae</taxon>
        <taxon>Actinobacillus</taxon>
    </lineage>
</organism>
<keyword id="KW-0131">Cell cycle</keyword>
<keyword id="KW-0132">Cell division</keyword>
<keyword id="KW-0175">Coiled coil</keyword>
<keyword id="KW-0963">Cytoplasm</keyword>
<keyword id="KW-1185">Reference proteome</keyword>
<keyword id="KW-0717">Septation</keyword>